<organism>
    <name type="scientific">Leptotrichia buccalis (strain ATCC 14201 / DSM 1135 / JCM 12969 / NCTC 10249 / C-1013-b)</name>
    <dbReference type="NCBI Taxonomy" id="523794"/>
    <lineage>
        <taxon>Bacteria</taxon>
        <taxon>Fusobacteriati</taxon>
        <taxon>Fusobacteriota</taxon>
        <taxon>Fusobacteriia</taxon>
        <taxon>Fusobacteriales</taxon>
        <taxon>Leptotrichiaceae</taxon>
        <taxon>Leptotrichia</taxon>
    </lineage>
</organism>
<proteinExistence type="inferred from homology"/>
<accession>C7NC37</accession>
<name>SECD_LEPBD</name>
<evidence type="ECO:0000255" key="1">
    <source>
        <dbReference type="HAMAP-Rule" id="MF_01463"/>
    </source>
</evidence>
<sequence length="404" mass="43156">MQNKKSHYIWLFLVIFVPALILYFNKVKLGLDLRGGTSVVLQAQGKIEADTMSKVRNIIERRVNSIGVAEPVIQLSGNDKLIVELAGIKDPQKAIELIGTTAKLEFRIKNKDGSYGPVLLEGSALKSAGVSRDQVGMPSVSFELNSQGANTFAKITRENIGKQLAIMLDNKEQSAPTINSEINGGSGIITGRFSMEEANNLANLLKSGALPVEIKIVENRTVGATLGVDSIKQTGIAGLIALGVISVFMIAIYKIPGIVADIALLINGVLVLGLLSGIGAALTLPGIAGFILTLGMAVDSNVITYERIKEELRLGESLHDAVERGYENAFPAIIDGNITTLLVAAVLFFLGTGPIKGFAVTLSLGVVATIITGVFVSKVILKLFIKTFNIKREQLFWKGALNED</sequence>
<keyword id="KW-0997">Cell inner membrane</keyword>
<keyword id="KW-1003">Cell membrane</keyword>
<keyword id="KW-0472">Membrane</keyword>
<keyword id="KW-0653">Protein transport</keyword>
<keyword id="KW-0811">Translocation</keyword>
<keyword id="KW-0812">Transmembrane</keyword>
<keyword id="KW-1133">Transmembrane helix</keyword>
<keyword id="KW-0813">Transport</keyword>
<dbReference type="EMBL" id="CP001685">
    <property type="protein sequence ID" value="ACV39718.1"/>
    <property type="molecule type" value="Genomic_DNA"/>
</dbReference>
<dbReference type="RefSeq" id="WP_015770057.1">
    <property type="nucleotide sequence ID" value="NC_013192.1"/>
</dbReference>
<dbReference type="SMR" id="C7NC37"/>
<dbReference type="STRING" id="523794.Lebu_1853"/>
<dbReference type="KEGG" id="lba:Lebu_1853"/>
<dbReference type="eggNOG" id="COG0342">
    <property type="taxonomic scope" value="Bacteria"/>
</dbReference>
<dbReference type="HOGENOM" id="CLU_007894_4_2_0"/>
<dbReference type="OrthoDB" id="9805019at2"/>
<dbReference type="Proteomes" id="UP000001910">
    <property type="component" value="Chromosome"/>
</dbReference>
<dbReference type="GO" id="GO:0005886">
    <property type="term" value="C:plasma membrane"/>
    <property type="evidence" value="ECO:0007669"/>
    <property type="project" value="UniProtKB-SubCell"/>
</dbReference>
<dbReference type="GO" id="GO:0015450">
    <property type="term" value="F:protein-transporting ATPase activity"/>
    <property type="evidence" value="ECO:0007669"/>
    <property type="project" value="InterPro"/>
</dbReference>
<dbReference type="GO" id="GO:0065002">
    <property type="term" value="P:intracellular protein transmembrane transport"/>
    <property type="evidence" value="ECO:0007669"/>
    <property type="project" value="UniProtKB-UniRule"/>
</dbReference>
<dbReference type="GO" id="GO:0006605">
    <property type="term" value="P:protein targeting"/>
    <property type="evidence" value="ECO:0007669"/>
    <property type="project" value="UniProtKB-UniRule"/>
</dbReference>
<dbReference type="GO" id="GO:0043952">
    <property type="term" value="P:protein transport by the Sec complex"/>
    <property type="evidence" value="ECO:0007669"/>
    <property type="project" value="UniProtKB-UniRule"/>
</dbReference>
<dbReference type="FunFam" id="1.20.1640.10:FF:000004">
    <property type="entry name" value="Protein translocase subunit SecD"/>
    <property type="match status" value="1"/>
</dbReference>
<dbReference type="Gene3D" id="3.30.1360.200">
    <property type="match status" value="1"/>
</dbReference>
<dbReference type="Gene3D" id="1.20.1640.10">
    <property type="entry name" value="Multidrug efflux transporter AcrB transmembrane domain"/>
    <property type="match status" value="1"/>
</dbReference>
<dbReference type="HAMAP" id="MF_01463_B">
    <property type="entry name" value="SecD_B"/>
    <property type="match status" value="1"/>
</dbReference>
<dbReference type="InterPro" id="IPR005791">
    <property type="entry name" value="SecD"/>
</dbReference>
<dbReference type="InterPro" id="IPR022813">
    <property type="entry name" value="SecD/SecF_arch_bac"/>
</dbReference>
<dbReference type="InterPro" id="IPR022646">
    <property type="entry name" value="SecD/SecF_CS"/>
</dbReference>
<dbReference type="InterPro" id="IPR048631">
    <property type="entry name" value="SecD_1st"/>
</dbReference>
<dbReference type="InterPro" id="IPR048634">
    <property type="entry name" value="SecD_SecF_C"/>
</dbReference>
<dbReference type="InterPro" id="IPR055344">
    <property type="entry name" value="SecD_SecF_C_bact"/>
</dbReference>
<dbReference type="InterPro" id="IPR054384">
    <property type="entry name" value="SecDF_P1_head"/>
</dbReference>
<dbReference type="NCBIfam" id="TIGR00916">
    <property type="entry name" value="2A0604s01"/>
    <property type="match status" value="1"/>
</dbReference>
<dbReference type="NCBIfam" id="TIGR01129">
    <property type="entry name" value="secD"/>
    <property type="match status" value="1"/>
</dbReference>
<dbReference type="PANTHER" id="PTHR30081:SF1">
    <property type="entry name" value="PROTEIN TRANSLOCASE SUBUNIT SECD"/>
    <property type="match status" value="1"/>
</dbReference>
<dbReference type="PANTHER" id="PTHR30081">
    <property type="entry name" value="PROTEIN-EXPORT MEMBRANE PROTEIN SEC"/>
    <property type="match status" value="1"/>
</dbReference>
<dbReference type="Pfam" id="PF07549">
    <property type="entry name" value="Sec_GG"/>
    <property type="match status" value="1"/>
</dbReference>
<dbReference type="Pfam" id="PF21760">
    <property type="entry name" value="SecD_1st"/>
    <property type="match status" value="1"/>
</dbReference>
<dbReference type="Pfam" id="PF02355">
    <property type="entry name" value="SecD_SecF_C"/>
    <property type="match status" value="1"/>
</dbReference>
<dbReference type="Pfam" id="PF22599">
    <property type="entry name" value="SecDF_P1_head"/>
    <property type="match status" value="1"/>
</dbReference>
<dbReference type="SUPFAM" id="SSF82866">
    <property type="entry name" value="Multidrug efflux transporter AcrB transmembrane domain"/>
    <property type="match status" value="1"/>
</dbReference>
<feature type="chain" id="PRO_0000412679" description="Protein translocase subunit SecD">
    <location>
        <begin position="1"/>
        <end position="404"/>
    </location>
</feature>
<feature type="transmembrane region" description="Helical" evidence="1">
    <location>
        <begin position="7"/>
        <end position="27"/>
    </location>
</feature>
<feature type="transmembrane region" description="Helical" evidence="1">
    <location>
        <begin position="239"/>
        <end position="259"/>
    </location>
</feature>
<feature type="transmembrane region" description="Helical" evidence="1">
    <location>
        <begin position="262"/>
        <end position="282"/>
    </location>
</feature>
<feature type="transmembrane region" description="Helical" evidence="1">
    <location>
        <begin position="283"/>
        <end position="303"/>
    </location>
</feature>
<feature type="transmembrane region" description="Helical" evidence="1">
    <location>
        <begin position="330"/>
        <end position="350"/>
    </location>
</feature>
<feature type="transmembrane region" description="Helical" evidence="1">
    <location>
        <begin position="357"/>
        <end position="377"/>
    </location>
</feature>
<gene>
    <name evidence="1" type="primary">secD</name>
    <name type="ordered locus">Lebu_1853</name>
</gene>
<protein>
    <recommendedName>
        <fullName evidence="1">Protein translocase subunit SecD</fullName>
    </recommendedName>
</protein>
<comment type="function">
    <text evidence="1">Part of the Sec protein translocase complex. Interacts with the SecYEG preprotein conducting channel. SecDF uses the proton motive force (PMF) to complete protein translocation after the ATP-dependent function of SecA.</text>
</comment>
<comment type="subunit">
    <text evidence="1">Forms a complex with SecF. Part of the essential Sec protein translocation apparatus which comprises SecA, SecYEG and auxiliary proteins SecDF. Other proteins may also be involved.</text>
</comment>
<comment type="subcellular location">
    <subcellularLocation>
        <location evidence="1">Cell inner membrane</location>
        <topology evidence="1">Multi-pass membrane protein</topology>
    </subcellularLocation>
</comment>
<comment type="similarity">
    <text evidence="1">Belongs to the SecD/SecF family. SecD subfamily.</text>
</comment>
<reference key="1">
    <citation type="journal article" date="2009" name="Stand. Genomic Sci.">
        <title>Complete genome sequence of Leptotrichia buccalis type strain (C-1013-b).</title>
        <authorList>
            <person name="Ivanova N."/>
            <person name="Gronow S."/>
            <person name="Lapidus A."/>
            <person name="Copeland A."/>
            <person name="Glavina Del Rio T."/>
            <person name="Nolan M."/>
            <person name="Lucas S."/>
            <person name="Chen F."/>
            <person name="Tice H."/>
            <person name="Cheng J.F."/>
            <person name="Saunders E."/>
            <person name="Bruce D."/>
            <person name="Goodwin L."/>
            <person name="Brettin T."/>
            <person name="Detter J.C."/>
            <person name="Han C."/>
            <person name="Pitluck S."/>
            <person name="Mikhailova N."/>
            <person name="Pati A."/>
            <person name="Mavrommatis K."/>
            <person name="Chen A."/>
            <person name="Palaniappan K."/>
            <person name="Land M."/>
            <person name="Hauser L."/>
            <person name="Chang Y.J."/>
            <person name="Jeffries C.D."/>
            <person name="Chain P."/>
            <person name="Rohde C."/>
            <person name="Goker M."/>
            <person name="Bristow J."/>
            <person name="Eisen J.A."/>
            <person name="Markowitz V."/>
            <person name="Hugenholtz P."/>
            <person name="Kyrpides N.C."/>
            <person name="Klenk H.P."/>
        </authorList>
    </citation>
    <scope>NUCLEOTIDE SEQUENCE [LARGE SCALE GENOMIC DNA]</scope>
    <source>
        <strain>ATCC 14201 / DSM 1135 / JCM 12969 / NCTC 10249 / C-1013-b</strain>
    </source>
</reference>